<name>MDE10_SCHPO</name>
<keyword id="KW-1015">Disulfide bond</keyword>
<keyword id="KW-0256">Endoplasmic reticulum</keyword>
<keyword id="KW-0325">Glycoprotein</keyword>
<keyword id="KW-0378">Hydrolase</keyword>
<keyword id="KW-0469">Meiosis</keyword>
<keyword id="KW-0479">Metal-binding</keyword>
<keyword id="KW-0482">Metalloprotease</keyword>
<keyword id="KW-0645">Protease</keyword>
<keyword id="KW-1185">Reference proteome</keyword>
<keyword id="KW-0732">Signal</keyword>
<keyword id="KW-0749">Sporulation</keyword>
<keyword id="KW-0862">Zinc</keyword>
<gene>
    <name type="primary">mde10</name>
    <name type="synonym">mug139</name>
    <name type="ORF">SPAC17A5.04c</name>
</gene>
<protein>
    <recommendedName>
        <fullName>Zinc metalloprotease mde10</fullName>
        <ecNumber>3.4.24.-</ecNumber>
    </recommendedName>
    <alternativeName>
        <fullName>Meiotically up-regulated gene 139 protein</fullName>
    </alternativeName>
    <alternativeName>
        <fullName>Sporulation protein mde10</fullName>
    </alternativeName>
</protein>
<feature type="signal peptide" evidence="2">
    <location>
        <begin position="1"/>
        <end position="15"/>
    </location>
</feature>
<feature type="chain" id="PRO_0000029210" description="Zinc metalloprotease mde10">
    <location>
        <begin position="16"/>
        <end position="512"/>
    </location>
</feature>
<feature type="domain" description="Peptidase M12B" evidence="4">
    <location>
        <begin position="65"/>
        <end position="306"/>
    </location>
</feature>
<feature type="domain" description="Disintegrin" evidence="3">
    <location>
        <begin position="315"/>
        <end position="402"/>
    </location>
</feature>
<feature type="active site" evidence="4 5">
    <location>
        <position position="230"/>
    </location>
</feature>
<feature type="binding site" evidence="1">
    <location>
        <position position="229"/>
    </location>
    <ligand>
        <name>Zn(2+)</name>
        <dbReference type="ChEBI" id="CHEBI:29105"/>
        <note>catalytic</note>
    </ligand>
</feature>
<feature type="binding site" evidence="1">
    <location>
        <position position="233"/>
    </location>
    <ligand>
        <name>Zn(2+)</name>
        <dbReference type="ChEBI" id="CHEBI:29105"/>
        <note>catalytic</note>
    </ligand>
</feature>
<feature type="binding site" evidence="8">
    <location>
        <position position="239"/>
    </location>
    <ligand>
        <name>Zn(2+)</name>
        <dbReference type="ChEBI" id="CHEBI:29105"/>
        <note>catalytic</note>
    </ligand>
</feature>
<feature type="glycosylation site" description="N-linked (GlcNAc...) asparagine" evidence="2">
    <location>
        <position position="35"/>
    </location>
</feature>
<feature type="glycosylation site" description="N-linked (GlcNAc...) asparagine" evidence="2">
    <location>
        <position position="432"/>
    </location>
</feature>
<feature type="disulfide bond" evidence="1">
    <location>
        <begin position="246"/>
        <end position="254"/>
    </location>
</feature>
<feature type="disulfide bond" evidence="1">
    <location>
        <begin position="374"/>
        <end position="394"/>
    </location>
</feature>
<feature type="mutagenesis site" description="No effect on sporulation." evidence="6">
    <original>E</original>
    <variation>A</variation>
    <location>
        <position position="230"/>
    </location>
</feature>
<sequence>MRLVLLFSCVLAVSSYAEIILAHSDENLLSRTKNNLSKWNENRLYDYGSKSTMSLPVSSLFPALQTLWIGVVADCSYVTHFTSRMEAKKHIFQEFEGVSTLYEDSFNINVQIHSLILPSAHDCSANVVDRPEISMSPRISIEEKLEIFSKWKYESPGNNVFEAISPHERESFPSEPQVSVLFTSSVKRSPHGVSWFATICSETHIENEWHVGPLSVVSAYPNDRLVVAHEIGHILGLIHDCNKKSCGDHSEACCPLSSSLCDAQELYIMNPSNSYTYANLRFSDCSILQLHSLVEKKYVSLSCLSKPSEKSVLRLGTCGNGIVEDGEECDCGEDCENNPCCDGKTCKLTKGSLCDDQQDACCYQCHFKNAGTLCRQSTNPCDKPEFCTGISSKCPVDENWDDGRICQDSLGMGSCASGVCTSASRQCKKLTNFSSLSCHSDSCKVSCQNEDGTCFISAKDYIDGTRCRGGLCYNGVCVPIEGSSASWSKQPSLFCASGTMLISLAVIAWFFW</sequence>
<dbReference type="EC" id="3.4.24.-"/>
<dbReference type="EMBL" id="CU329670">
    <property type="protein sequence ID" value="CAB11504.1"/>
    <property type="molecule type" value="Genomic_DNA"/>
</dbReference>
<dbReference type="EMBL" id="AB027771">
    <property type="protein sequence ID" value="BAA87075.1"/>
    <property type="molecule type" value="Genomic_DNA"/>
</dbReference>
<dbReference type="PIR" id="T37819">
    <property type="entry name" value="T37819"/>
</dbReference>
<dbReference type="RefSeq" id="NP_593472.1">
    <property type="nucleotide sequence ID" value="NM_001018905.2"/>
</dbReference>
<dbReference type="SMR" id="O13766"/>
<dbReference type="BioGRID" id="278653">
    <property type="interactions" value="1"/>
</dbReference>
<dbReference type="FunCoup" id="O13766">
    <property type="interactions" value="38"/>
</dbReference>
<dbReference type="STRING" id="284812.O13766"/>
<dbReference type="MEROPS" id="M12.180"/>
<dbReference type="GlyCosmos" id="O13766">
    <property type="glycosylation" value="2 sites, No reported glycans"/>
</dbReference>
<dbReference type="PaxDb" id="4896-SPAC17A5.04c.1"/>
<dbReference type="EnsemblFungi" id="SPAC17A5.04c.1">
    <property type="protein sequence ID" value="SPAC17A5.04c.1:pep"/>
    <property type="gene ID" value="SPAC17A5.04c"/>
</dbReference>
<dbReference type="GeneID" id="2542178"/>
<dbReference type="KEGG" id="spo:2542178"/>
<dbReference type="PomBase" id="SPAC17A5.04c">
    <property type="gene designation" value="mde10"/>
</dbReference>
<dbReference type="VEuPathDB" id="FungiDB:SPAC17A5.04c"/>
<dbReference type="eggNOG" id="KOG3607">
    <property type="taxonomic scope" value="Eukaryota"/>
</dbReference>
<dbReference type="HOGENOM" id="CLU_522915_0_0_1"/>
<dbReference type="InParanoid" id="O13766"/>
<dbReference type="OMA" id="HERESFP"/>
<dbReference type="PhylomeDB" id="O13766"/>
<dbReference type="Reactome" id="R-SPO-6798695">
    <property type="pathway name" value="Neutrophil degranulation"/>
</dbReference>
<dbReference type="Reactome" id="R-SPO-8941237">
    <property type="pathway name" value="Invadopodia formation"/>
</dbReference>
<dbReference type="PRO" id="PR:O13766"/>
<dbReference type="Proteomes" id="UP000002485">
    <property type="component" value="Chromosome I"/>
</dbReference>
<dbReference type="GO" id="GO:0005619">
    <property type="term" value="C:ascospore wall"/>
    <property type="evidence" value="ECO:0000314"/>
    <property type="project" value="PomBase"/>
</dbReference>
<dbReference type="GO" id="GO:0005783">
    <property type="term" value="C:endoplasmic reticulum"/>
    <property type="evidence" value="ECO:0007005"/>
    <property type="project" value="PomBase"/>
</dbReference>
<dbReference type="GO" id="GO:0005789">
    <property type="term" value="C:endoplasmic reticulum membrane"/>
    <property type="evidence" value="ECO:0000314"/>
    <property type="project" value="PomBase"/>
</dbReference>
<dbReference type="GO" id="GO:0004222">
    <property type="term" value="F:metalloendopeptidase activity"/>
    <property type="evidence" value="ECO:0000318"/>
    <property type="project" value="GO_Central"/>
</dbReference>
<dbReference type="GO" id="GO:0008270">
    <property type="term" value="F:zinc ion binding"/>
    <property type="evidence" value="ECO:0000255"/>
    <property type="project" value="PomBase"/>
</dbReference>
<dbReference type="GO" id="GO:0030476">
    <property type="term" value="P:ascospore wall assembly"/>
    <property type="evidence" value="ECO:0000315"/>
    <property type="project" value="PomBase"/>
</dbReference>
<dbReference type="GO" id="GO:0006508">
    <property type="term" value="P:proteolysis"/>
    <property type="evidence" value="ECO:0000318"/>
    <property type="project" value="GO_Central"/>
</dbReference>
<dbReference type="FunFam" id="4.10.70.10:FF:000001">
    <property type="entry name" value="Disintegrin and metalloproteinase domain-containing protein 22"/>
    <property type="match status" value="1"/>
</dbReference>
<dbReference type="Gene3D" id="3.40.390.10">
    <property type="entry name" value="Collagenase (Catalytic Domain)"/>
    <property type="match status" value="1"/>
</dbReference>
<dbReference type="Gene3D" id="4.10.70.10">
    <property type="entry name" value="Disintegrin domain"/>
    <property type="match status" value="1"/>
</dbReference>
<dbReference type="InterPro" id="IPR001762">
    <property type="entry name" value="Disintegrin_dom"/>
</dbReference>
<dbReference type="InterPro" id="IPR036436">
    <property type="entry name" value="Disintegrin_dom_sf"/>
</dbReference>
<dbReference type="InterPro" id="IPR024079">
    <property type="entry name" value="MetalloPept_cat_dom_sf"/>
</dbReference>
<dbReference type="InterPro" id="IPR001590">
    <property type="entry name" value="Peptidase_M12B"/>
</dbReference>
<dbReference type="PANTHER" id="PTHR11905">
    <property type="entry name" value="ADAM A DISINTEGRIN AND METALLOPROTEASE DOMAIN"/>
    <property type="match status" value="1"/>
</dbReference>
<dbReference type="PANTHER" id="PTHR11905:SF159">
    <property type="entry name" value="ADAM METALLOPROTEASE"/>
    <property type="match status" value="1"/>
</dbReference>
<dbReference type="Pfam" id="PF00200">
    <property type="entry name" value="Disintegrin"/>
    <property type="match status" value="1"/>
</dbReference>
<dbReference type="Pfam" id="PF13688">
    <property type="entry name" value="Reprolysin_5"/>
    <property type="match status" value="1"/>
</dbReference>
<dbReference type="SMART" id="SM00050">
    <property type="entry name" value="DISIN"/>
    <property type="match status" value="1"/>
</dbReference>
<dbReference type="SUPFAM" id="SSF57552">
    <property type="entry name" value="Blood coagulation inhibitor (disintegrin)"/>
    <property type="match status" value="1"/>
</dbReference>
<dbReference type="SUPFAM" id="SSF55486">
    <property type="entry name" value="Metalloproteases ('zincins'), catalytic domain"/>
    <property type="match status" value="1"/>
</dbReference>
<dbReference type="PROSITE" id="PS50215">
    <property type="entry name" value="ADAM_MEPRO"/>
    <property type="match status" value="1"/>
</dbReference>
<dbReference type="PROSITE" id="PS50214">
    <property type="entry name" value="DISINTEGRIN_2"/>
    <property type="match status" value="1"/>
</dbReference>
<dbReference type="PROSITE" id="PS00142">
    <property type="entry name" value="ZINC_PROTEASE"/>
    <property type="match status" value="1"/>
</dbReference>
<organism>
    <name type="scientific">Schizosaccharomyces pombe (strain 972 / ATCC 24843)</name>
    <name type="common">Fission yeast</name>
    <dbReference type="NCBI Taxonomy" id="284812"/>
    <lineage>
        <taxon>Eukaryota</taxon>
        <taxon>Fungi</taxon>
        <taxon>Dikarya</taxon>
        <taxon>Ascomycota</taxon>
        <taxon>Taphrinomycotina</taxon>
        <taxon>Schizosaccharomycetes</taxon>
        <taxon>Schizosaccharomycetales</taxon>
        <taxon>Schizosaccharomycetaceae</taxon>
        <taxon>Schizosaccharomyces</taxon>
    </lineage>
</organism>
<evidence type="ECO:0000250" key="1"/>
<evidence type="ECO:0000255" key="2"/>
<evidence type="ECO:0000255" key="3">
    <source>
        <dbReference type="PROSITE-ProRule" id="PRU00068"/>
    </source>
</evidence>
<evidence type="ECO:0000255" key="4">
    <source>
        <dbReference type="PROSITE-ProRule" id="PRU00276"/>
    </source>
</evidence>
<evidence type="ECO:0000255" key="5">
    <source>
        <dbReference type="PROSITE-ProRule" id="PRU10095"/>
    </source>
</evidence>
<evidence type="ECO:0000269" key="6">
    <source>
    </source>
</evidence>
<evidence type="ECO:0000269" key="7">
    <source>
    </source>
</evidence>
<evidence type="ECO:0000305" key="8"/>
<proteinExistence type="evidence at protein level"/>
<reference key="1">
    <citation type="journal article" date="2002" name="Nature">
        <title>The genome sequence of Schizosaccharomyces pombe.</title>
        <authorList>
            <person name="Wood V."/>
            <person name="Gwilliam R."/>
            <person name="Rajandream M.A."/>
            <person name="Lyne M.H."/>
            <person name="Lyne R."/>
            <person name="Stewart A."/>
            <person name="Sgouros J.G."/>
            <person name="Peat N."/>
            <person name="Hayles J."/>
            <person name="Baker S.G."/>
            <person name="Basham D."/>
            <person name="Bowman S."/>
            <person name="Brooks K."/>
            <person name="Brown D."/>
            <person name="Brown S."/>
            <person name="Chillingworth T."/>
            <person name="Churcher C.M."/>
            <person name="Collins M."/>
            <person name="Connor R."/>
            <person name="Cronin A."/>
            <person name="Davis P."/>
            <person name="Feltwell T."/>
            <person name="Fraser A."/>
            <person name="Gentles S."/>
            <person name="Goble A."/>
            <person name="Hamlin N."/>
            <person name="Harris D.E."/>
            <person name="Hidalgo J."/>
            <person name="Hodgson G."/>
            <person name="Holroyd S."/>
            <person name="Hornsby T."/>
            <person name="Howarth S."/>
            <person name="Huckle E.J."/>
            <person name="Hunt S."/>
            <person name="Jagels K."/>
            <person name="James K.D."/>
            <person name="Jones L."/>
            <person name="Jones M."/>
            <person name="Leather S."/>
            <person name="McDonald S."/>
            <person name="McLean J."/>
            <person name="Mooney P."/>
            <person name="Moule S."/>
            <person name="Mungall K.L."/>
            <person name="Murphy L.D."/>
            <person name="Niblett D."/>
            <person name="Odell C."/>
            <person name="Oliver K."/>
            <person name="O'Neil S."/>
            <person name="Pearson D."/>
            <person name="Quail M.A."/>
            <person name="Rabbinowitsch E."/>
            <person name="Rutherford K.M."/>
            <person name="Rutter S."/>
            <person name="Saunders D."/>
            <person name="Seeger K."/>
            <person name="Sharp S."/>
            <person name="Skelton J."/>
            <person name="Simmonds M.N."/>
            <person name="Squares R."/>
            <person name="Squares S."/>
            <person name="Stevens K."/>
            <person name="Taylor K."/>
            <person name="Taylor R.G."/>
            <person name="Tivey A."/>
            <person name="Walsh S.V."/>
            <person name="Warren T."/>
            <person name="Whitehead S."/>
            <person name="Woodward J.R."/>
            <person name="Volckaert G."/>
            <person name="Aert R."/>
            <person name="Robben J."/>
            <person name="Grymonprez B."/>
            <person name="Weltjens I."/>
            <person name="Vanstreels E."/>
            <person name="Rieger M."/>
            <person name="Schaefer M."/>
            <person name="Mueller-Auer S."/>
            <person name="Gabel C."/>
            <person name="Fuchs M."/>
            <person name="Duesterhoeft A."/>
            <person name="Fritzc C."/>
            <person name="Holzer E."/>
            <person name="Moestl D."/>
            <person name="Hilbert H."/>
            <person name="Borzym K."/>
            <person name="Langer I."/>
            <person name="Beck A."/>
            <person name="Lehrach H."/>
            <person name="Reinhardt R."/>
            <person name="Pohl T.M."/>
            <person name="Eger P."/>
            <person name="Zimmermann W."/>
            <person name="Wedler H."/>
            <person name="Wambutt R."/>
            <person name="Purnelle B."/>
            <person name="Goffeau A."/>
            <person name="Cadieu E."/>
            <person name="Dreano S."/>
            <person name="Gloux S."/>
            <person name="Lelaure V."/>
            <person name="Mottier S."/>
            <person name="Galibert F."/>
            <person name="Aves S.J."/>
            <person name="Xiang Z."/>
            <person name="Hunt C."/>
            <person name="Moore K."/>
            <person name="Hurst S.M."/>
            <person name="Lucas M."/>
            <person name="Rochet M."/>
            <person name="Gaillardin C."/>
            <person name="Tallada V.A."/>
            <person name="Garzon A."/>
            <person name="Thode G."/>
            <person name="Daga R.R."/>
            <person name="Cruzado L."/>
            <person name="Jimenez J."/>
            <person name="Sanchez M."/>
            <person name="del Rey F."/>
            <person name="Benito J."/>
            <person name="Dominguez A."/>
            <person name="Revuelta J.L."/>
            <person name="Moreno S."/>
            <person name="Armstrong J."/>
            <person name="Forsburg S.L."/>
            <person name="Cerutti L."/>
            <person name="Lowe T."/>
            <person name="McCombie W.R."/>
            <person name="Paulsen I."/>
            <person name="Potashkin J."/>
            <person name="Shpakovski G.V."/>
            <person name="Ussery D."/>
            <person name="Barrell B.G."/>
            <person name="Nurse P."/>
        </authorList>
    </citation>
    <scope>NUCLEOTIDE SEQUENCE [LARGE SCALE GENOMIC DNA]</scope>
    <source>
        <strain>972 / ATCC 24843</strain>
    </source>
</reference>
<reference key="2">
    <citation type="journal article" date="2000" name="Genes Cells">
        <title>Large-scale screening of intracellular protein localization in living fission yeast cells by the use of a GFP-fusion genomic DNA library.</title>
        <authorList>
            <person name="Ding D.-Q."/>
            <person name="Tomita Y."/>
            <person name="Yamamoto A."/>
            <person name="Chikashige Y."/>
            <person name="Haraguchi T."/>
            <person name="Hiraoka Y."/>
        </authorList>
    </citation>
    <scope>NUCLEOTIDE SEQUENCE [LARGE SCALE GENOMIC DNA] OF 1-49</scope>
    <scope>SUBCELLULAR LOCATION</scope>
    <source>
        <strain>ATCC 38364 / 968</strain>
    </source>
</reference>
<reference key="3">
    <citation type="journal article" date="2004" name="Eukaryot. Cell">
        <title>ADAM family protein Mde10 is essential for development of spore envelopes in the fission yeast Schizosaccharomyces pombe.</title>
        <authorList>
            <person name="Nakamura T."/>
            <person name="Abe H."/>
            <person name="Hirata A."/>
            <person name="Shimoda C."/>
        </authorList>
    </citation>
    <scope>FUNCTION</scope>
    <scope>SUBCELLULAR LOCATION</scope>
    <scope>GLYCOSYLATION</scope>
    <scope>MUTAGENESIS OF GLU-230</scope>
</reference>
<reference key="4">
    <citation type="journal article" date="2005" name="Curr. Biol.">
        <title>A large-scale screen in S. pombe identifies seven novel genes required for critical meiotic events.</title>
        <authorList>
            <person name="Martin-Castellanos C."/>
            <person name="Blanco M."/>
            <person name="Rozalen A.E."/>
            <person name="Perez-Hidalgo L."/>
            <person name="Garcia A.I."/>
            <person name="Conde F."/>
            <person name="Mata J."/>
            <person name="Ellermeier C."/>
            <person name="Davis L."/>
            <person name="San-Segundo P."/>
            <person name="Smith G.R."/>
            <person name="Moreno S."/>
        </authorList>
    </citation>
    <scope>FUNCTION IN MEIOSIS</scope>
</reference>
<reference key="5">
    <citation type="journal article" date="2006" name="Nat. Biotechnol.">
        <title>ORFeome cloning and global analysis of protein localization in the fission yeast Schizosaccharomyces pombe.</title>
        <authorList>
            <person name="Matsuyama A."/>
            <person name="Arai R."/>
            <person name="Yashiroda Y."/>
            <person name="Shirai A."/>
            <person name="Kamata A."/>
            <person name="Sekido S."/>
            <person name="Kobayashi Y."/>
            <person name="Hashimoto A."/>
            <person name="Hamamoto M."/>
            <person name="Hiraoka Y."/>
            <person name="Horinouchi S."/>
            <person name="Yoshida M."/>
        </authorList>
    </citation>
    <scope>SUBCELLULAR LOCATION [LARGE SCALE ANALYSIS]</scope>
</reference>
<accession>O13766</accession>
<accession>Q9USG1</accession>
<comment type="function">
    <text evidence="6 7">Has a role in the development of the spore envelope.</text>
</comment>
<comment type="cofactor">
    <cofactor evidence="1">
        <name>Zn(2+)</name>
        <dbReference type="ChEBI" id="CHEBI:29105"/>
    </cofactor>
    <text evidence="1">Binds 1 zinc ion per subunit.</text>
</comment>
<comment type="subcellular location">
    <subcellularLocation>
        <location>Endoplasmic reticulum</location>
    </subcellularLocation>
    <subcellularLocation>
        <location>Spore wall</location>
    </subcellularLocation>
    <text>Endoplasmic reticulum during meiosis. Located at the spore rim at the end of meiosis.</text>
</comment>
<comment type="PTM">
    <text evidence="6">Glycosylated.</text>
</comment>